<protein>
    <recommendedName>
        <fullName evidence="1">Dihydroorotate dehydrogenase (quinone)</fullName>
        <ecNumber evidence="1">1.3.5.2</ecNumber>
    </recommendedName>
    <alternativeName>
        <fullName evidence="1">DHOdehase</fullName>
        <shortName evidence="1">DHOD</shortName>
        <shortName evidence="1">DHODase</shortName>
    </alternativeName>
    <alternativeName>
        <fullName evidence="1">Dihydroorotate oxidase</fullName>
    </alternativeName>
</protein>
<name>PYRD_SHEON</name>
<dbReference type="EC" id="1.3.5.2" evidence="1"/>
<dbReference type="EMBL" id="AE014299">
    <property type="protein sequence ID" value="AAN55622.1"/>
    <property type="molecule type" value="Genomic_DNA"/>
</dbReference>
<dbReference type="RefSeq" id="NP_718178.1">
    <property type="nucleotide sequence ID" value="NC_004347.2"/>
</dbReference>
<dbReference type="RefSeq" id="WP_011072542.1">
    <property type="nucleotide sequence ID" value="NC_004347.2"/>
</dbReference>
<dbReference type="SMR" id="Q8EDZ8"/>
<dbReference type="STRING" id="211586.SO_2592"/>
<dbReference type="PaxDb" id="211586-SO_2592"/>
<dbReference type="KEGG" id="son:SO_2592"/>
<dbReference type="PATRIC" id="fig|211586.12.peg.2495"/>
<dbReference type="eggNOG" id="COG0167">
    <property type="taxonomic scope" value="Bacteria"/>
</dbReference>
<dbReference type="HOGENOM" id="CLU_013640_2_0_6"/>
<dbReference type="OrthoDB" id="9802377at2"/>
<dbReference type="PhylomeDB" id="Q8EDZ8"/>
<dbReference type="BioCyc" id="SONE211586:G1GMP-2377-MONOMER"/>
<dbReference type="UniPathway" id="UPA00070">
    <property type="reaction ID" value="UER00946"/>
</dbReference>
<dbReference type="Proteomes" id="UP000008186">
    <property type="component" value="Chromosome"/>
</dbReference>
<dbReference type="GO" id="GO:0005737">
    <property type="term" value="C:cytoplasm"/>
    <property type="evidence" value="ECO:0007669"/>
    <property type="project" value="InterPro"/>
</dbReference>
<dbReference type="GO" id="GO:0005886">
    <property type="term" value="C:plasma membrane"/>
    <property type="evidence" value="ECO:0007669"/>
    <property type="project" value="UniProtKB-SubCell"/>
</dbReference>
<dbReference type="GO" id="GO:0106430">
    <property type="term" value="F:dihydroorotate dehydrogenase (quinone) activity"/>
    <property type="evidence" value="ECO:0007669"/>
    <property type="project" value="UniProtKB-EC"/>
</dbReference>
<dbReference type="GO" id="GO:0004152">
    <property type="term" value="F:dihydroorotate dehydrogenase activity"/>
    <property type="evidence" value="ECO:0000318"/>
    <property type="project" value="GO_Central"/>
</dbReference>
<dbReference type="GO" id="GO:0006207">
    <property type="term" value="P:'de novo' pyrimidine nucleobase biosynthetic process"/>
    <property type="evidence" value="ECO:0000318"/>
    <property type="project" value="GO_Central"/>
</dbReference>
<dbReference type="GO" id="GO:0044205">
    <property type="term" value="P:'de novo' UMP biosynthetic process"/>
    <property type="evidence" value="ECO:0007669"/>
    <property type="project" value="UniProtKB-UniRule"/>
</dbReference>
<dbReference type="GO" id="GO:0009220">
    <property type="term" value="P:pyrimidine ribonucleotide biosynthetic process"/>
    <property type="evidence" value="ECO:0000318"/>
    <property type="project" value="GO_Central"/>
</dbReference>
<dbReference type="CDD" id="cd04738">
    <property type="entry name" value="DHOD_2_like"/>
    <property type="match status" value="1"/>
</dbReference>
<dbReference type="FunFam" id="3.20.20.70:FF:000028">
    <property type="entry name" value="Dihydroorotate dehydrogenase (quinone)"/>
    <property type="match status" value="1"/>
</dbReference>
<dbReference type="Gene3D" id="3.20.20.70">
    <property type="entry name" value="Aldolase class I"/>
    <property type="match status" value="1"/>
</dbReference>
<dbReference type="HAMAP" id="MF_00225">
    <property type="entry name" value="DHO_dh_type2"/>
    <property type="match status" value="1"/>
</dbReference>
<dbReference type="InterPro" id="IPR013785">
    <property type="entry name" value="Aldolase_TIM"/>
</dbReference>
<dbReference type="InterPro" id="IPR050074">
    <property type="entry name" value="DHO_dehydrogenase"/>
</dbReference>
<dbReference type="InterPro" id="IPR012135">
    <property type="entry name" value="Dihydroorotate_DH_1_2"/>
</dbReference>
<dbReference type="InterPro" id="IPR005719">
    <property type="entry name" value="Dihydroorotate_DH_2"/>
</dbReference>
<dbReference type="InterPro" id="IPR005720">
    <property type="entry name" value="Dihydroorotate_DH_cat"/>
</dbReference>
<dbReference type="InterPro" id="IPR001295">
    <property type="entry name" value="Dihydroorotate_DH_CS"/>
</dbReference>
<dbReference type="NCBIfam" id="NF003644">
    <property type="entry name" value="PRK05286.1-1"/>
    <property type="match status" value="1"/>
</dbReference>
<dbReference type="NCBIfam" id="NF003645">
    <property type="entry name" value="PRK05286.1-2"/>
    <property type="match status" value="1"/>
</dbReference>
<dbReference type="NCBIfam" id="NF003646">
    <property type="entry name" value="PRK05286.1-4"/>
    <property type="match status" value="1"/>
</dbReference>
<dbReference type="NCBIfam" id="NF003652">
    <property type="entry name" value="PRK05286.2-5"/>
    <property type="match status" value="1"/>
</dbReference>
<dbReference type="NCBIfam" id="TIGR01036">
    <property type="entry name" value="pyrD_sub2"/>
    <property type="match status" value="1"/>
</dbReference>
<dbReference type="PANTHER" id="PTHR48109:SF4">
    <property type="entry name" value="DIHYDROOROTATE DEHYDROGENASE (QUINONE), MITOCHONDRIAL"/>
    <property type="match status" value="1"/>
</dbReference>
<dbReference type="PANTHER" id="PTHR48109">
    <property type="entry name" value="DIHYDROOROTATE DEHYDROGENASE (QUINONE), MITOCHONDRIAL-RELATED"/>
    <property type="match status" value="1"/>
</dbReference>
<dbReference type="Pfam" id="PF01180">
    <property type="entry name" value="DHO_dh"/>
    <property type="match status" value="1"/>
</dbReference>
<dbReference type="PIRSF" id="PIRSF000164">
    <property type="entry name" value="DHO_oxidase"/>
    <property type="match status" value="1"/>
</dbReference>
<dbReference type="SUPFAM" id="SSF51395">
    <property type="entry name" value="FMN-linked oxidoreductases"/>
    <property type="match status" value="1"/>
</dbReference>
<dbReference type="PROSITE" id="PS00911">
    <property type="entry name" value="DHODEHASE_1"/>
    <property type="match status" value="1"/>
</dbReference>
<dbReference type="PROSITE" id="PS00912">
    <property type="entry name" value="DHODEHASE_2"/>
    <property type="match status" value="1"/>
</dbReference>
<proteinExistence type="inferred from homology"/>
<gene>
    <name evidence="1" type="primary">pyrD</name>
    <name type="ordered locus">SO_2592</name>
</gene>
<reference key="1">
    <citation type="journal article" date="2002" name="Nat. Biotechnol.">
        <title>Genome sequence of the dissimilatory metal ion-reducing bacterium Shewanella oneidensis.</title>
        <authorList>
            <person name="Heidelberg J.F."/>
            <person name="Paulsen I.T."/>
            <person name="Nelson K.E."/>
            <person name="Gaidos E.J."/>
            <person name="Nelson W.C."/>
            <person name="Read T.D."/>
            <person name="Eisen J.A."/>
            <person name="Seshadri R."/>
            <person name="Ward N.L."/>
            <person name="Methe B.A."/>
            <person name="Clayton R.A."/>
            <person name="Meyer T."/>
            <person name="Tsapin A."/>
            <person name="Scott J."/>
            <person name="Beanan M.J."/>
            <person name="Brinkac L.M."/>
            <person name="Daugherty S.C."/>
            <person name="DeBoy R.T."/>
            <person name="Dodson R.J."/>
            <person name="Durkin A.S."/>
            <person name="Haft D.H."/>
            <person name="Kolonay J.F."/>
            <person name="Madupu R."/>
            <person name="Peterson J.D."/>
            <person name="Umayam L.A."/>
            <person name="White O."/>
            <person name="Wolf A.M."/>
            <person name="Vamathevan J.J."/>
            <person name="Weidman J.F."/>
            <person name="Impraim M."/>
            <person name="Lee K."/>
            <person name="Berry K.J."/>
            <person name="Lee C."/>
            <person name="Mueller J."/>
            <person name="Khouri H.M."/>
            <person name="Gill J."/>
            <person name="Utterback T.R."/>
            <person name="McDonald L.A."/>
            <person name="Feldblyum T.V."/>
            <person name="Smith H.O."/>
            <person name="Venter J.C."/>
            <person name="Nealson K.H."/>
            <person name="Fraser C.M."/>
        </authorList>
    </citation>
    <scope>NUCLEOTIDE SEQUENCE [LARGE SCALE GENOMIC DNA]</scope>
    <source>
        <strain>ATCC 700550 / JCM 31522 / CIP 106686 / LMG 19005 / NCIMB 14063 / MR-1</strain>
    </source>
</reference>
<evidence type="ECO:0000255" key="1">
    <source>
        <dbReference type="HAMAP-Rule" id="MF_00225"/>
    </source>
</evidence>
<accession>Q8EDZ8</accession>
<organism>
    <name type="scientific">Shewanella oneidensis (strain ATCC 700550 / JCM 31522 / CIP 106686 / LMG 19005 / NCIMB 14063 / MR-1)</name>
    <dbReference type="NCBI Taxonomy" id="211586"/>
    <lineage>
        <taxon>Bacteria</taxon>
        <taxon>Pseudomonadati</taxon>
        <taxon>Pseudomonadota</taxon>
        <taxon>Gammaproteobacteria</taxon>
        <taxon>Alteromonadales</taxon>
        <taxon>Shewanellaceae</taxon>
        <taxon>Shewanella</taxon>
    </lineage>
</organism>
<feature type="chain" id="PRO_0000148475" description="Dihydroorotate dehydrogenase (quinone)">
    <location>
        <begin position="1"/>
        <end position="339"/>
    </location>
</feature>
<feature type="active site" description="Nucleophile" evidence="1">
    <location>
        <position position="175"/>
    </location>
</feature>
<feature type="binding site" evidence="1">
    <location>
        <begin position="62"/>
        <end position="66"/>
    </location>
    <ligand>
        <name>FMN</name>
        <dbReference type="ChEBI" id="CHEBI:58210"/>
    </ligand>
</feature>
<feature type="binding site" evidence="1">
    <location>
        <position position="66"/>
    </location>
    <ligand>
        <name>substrate</name>
    </ligand>
</feature>
<feature type="binding site" evidence="1">
    <location>
        <position position="86"/>
    </location>
    <ligand>
        <name>FMN</name>
        <dbReference type="ChEBI" id="CHEBI:58210"/>
    </ligand>
</feature>
<feature type="binding site" evidence="1">
    <location>
        <begin position="111"/>
        <end position="115"/>
    </location>
    <ligand>
        <name>substrate</name>
    </ligand>
</feature>
<feature type="binding site" evidence="1">
    <location>
        <position position="139"/>
    </location>
    <ligand>
        <name>FMN</name>
        <dbReference type="ChEBI" id="CHEBI:58210"/>
    </ligand>
</feature>
<feature type="binding site" evidence="1">
    <location>
        <position position="172"/>
    </location>
    <ligand>
        <name>FMN</name>
        <dbReference type="ChEBI" id="CHEBI:58210"/>
    </ligand>
</feature>
<feature type="binding site" evidence="1">
    <location>
        <position position="172"/>
    </location>
    <ligand>
        <name>substrate</name>
    </ligand>
</feature>
<feature type="binding site" evidence="1">
    <location>
        <position position="177"/>
    </location>
    <ligand>
        <name>substrate</name>
    </ligand>
</feature>
<feature type="binding site" evidence="1">
    <location>
        <position position="217"/>
    </location>
    <ligand>
        <name>FMN</name>
        <dbReference type="ChEBI" id="CHEBI:58210"/>
    </ligand>
</feature>
<feature type="binding site" evidence="1">
    <location>
        <position position="245"/>
    </location>
    <ligand>
        <name>FMN</name>
        <dbReference type="ChEBI" id="CHEBI:58210"/>
    </ligand>
</feature>
<feature type="binding site" evidence="1">
    <location>
        <begin position="246"/>
        <end position="247"/>
    </location>
    <ligand>
        <name>substrate</name>
    </ligand>
</feature>
<feature type="binding site" evidence="1">
    <location>
        <position position="268"/>
    </location>
    <ligand>
        <name>FMN</name>
        <dbReference type="ChEBI" id="CHEBI:58210"/>
    </ligand>
</feature>
<feature type="binding site" evidence="1">
    <location>
        <position position="297"/>
    </location>
    <ligand>
        <name>FMN</name>
        <dbReference type="ChEBI" id="CHEBI:58210"/>
    </ligand>
</feature>
<feature type="binding site" evidence="1">
    <location>
        <begin position="318"/>
        <end position="319"/>
    </location>
    <ligand>
        <name>FMN</name>
        <dbReference type="ChEBI" id="CHEBI:58210"/>
    </ligand>
</feature>
<sequence>MFYKIAQKVMFQMDPERAHNLAIGSLRMTGNGPLNAFYAQNITPAPVSFMGLTFPNPVGLAAGMDKDGESIDAFHAMGFGHVEVGTVTPRPQPGNDLPRLFRLKPAKAIINRMGFNNKGVDNLVKNLIAKKTDIMVGVNIGKNKDTPVEQGKDDYLICMDKVYLHAAYIAVNISSPNTPGLRSLQYGDLLDELLSAIKAKQLELADKHKKYVPIALKIAPDLTIEEIENIAQALIKNQFDGAIATNTTLTRDGVSGLANANESGGLSGKPLTELSTKVIKQLATCLQGQIPIIGVGGINSAEDALAKFDAGATMVQIYSGFIYQGPKLIKEIVEAYRLK</sequence>
<keyword id="KW-1003">Cell membrane</keyword>
<keyword id="KW-0285">Flavoprotein</keyword>
<keyword id="KW-0288">FMN</keyword>
<keyword id="KW-0472">Membrane</keyword>
<keyword id="KW-0560">Oxidoreductase</keyword>
<keyword id="KW-0665">Pyrimidine biosynthesis</keyword>
<keyword id="KW-1185">Reference proteome</keyword>
<comment type="function">
    <text evidence="1">Catalyzes the conversion of dihydroorotate to orotate with quinone as electron acceptor.</text>
</comment>
<comment type="catalytic activity">
    <reaction evidence="1">
        <text>(S)-dihydroorotate + a quinone = orotate + a quinol</text>
        <dbReference type="Rhea" id="RHEA:30187"/>
        <dbReference type="ChEBI" id="CHEBI:24646"/>
        <dbReference type="ChEBI" id="CHEBI:30839"/>
        <dbReference type="ChEBI" id="CHEBI:30864"/>
        <dbReference type="ChEBI" id="CHEBI:132124"/>
        <dbReference type="EC" id="1.3.5.2"/>
    </reaction>
</comment>
<comment type="cofactor">
    <cofactor evidence="1">
        <name>FMN</name>
        <dbReference type="ChEBI" id="CHEBI:58210"/>
    </cofactor>
    <text evidence="1">Binds 1 FMN per subunit.</text>
</comment>
<comment type="pathway">
    <text evidence="1">Pyrimidine metabolism; UMP biosynthesis via de novo pathway; orotate from (S)-dihydroorotate (quinone route): step 1/1.</text>
</comment>
<comment type="subunit">
    <text evidence="1">Monomer.</text>
</comment>
<comment type="subcellular location">
    <subcellularLocation>
        <location evidence="1">Cell membrane</location>
        <topology evidence="1">Peripheral membrane protein</topology>
    </subcellularLocation>
</comment>
<comment type="similarity">
    <text evidence="1">Belongs to the dihydroorotate dehydrogenase family. Type 2 subfamily.</text>
</comment>